<proteinExistence type="inferred from homology"/>
<keyword id="KW-0963">Cytoplasm</keyword>
<keyword id="KW-0456">Lyase</keyword>
<keyword id="KW-0585">Phenylalanine catabolism</keyword>
<keyword id="KW-0587">Phenylpropanoid metabolism</keyword>
<keyword id="KW-1185">Reference proteome</keyword>
<accession>P31425</accession>
<evidence type="ECO:0000250" key="1">
    <source>
        <dbReference type="UniProtKB" id="P11544"/>
    </source>
</evidence>
<evidence type="ECO:0000250" key="2">
    <source>
        <dbReference type="UniProtKB" id="P24481"/>
    </source>
</evidence>
<evidence type="ECO:0000250" key="3">
    <source>
        <dbReference type="UniProtKB" id="Q68G84"/>
    </source>
</evidence>
<evidence type="ECO:0000255" key="4">
    <source>
        <dbReference type="PROSITE-ProRule" id="PRU10122"/>
    </source>
</evidence>
<evidence type="ECO:0000305" key="5"/>
<protein>
    <recommendedName>
        <fullName>Phenylalanine ammonia-lyase 1</fullName>
        <ecNumber evidence="2">4.3.1.24</ecNumber>
    </recommendedName>
</protein>
<organism>
    <name type="scientific">Solanum tuberosum</name>
    <name type="common">Potato</name>
    <dbReference type="NCBI Taxonomy" id="4113"/>
    <lineage>
        <taxon>Eukaryota</taxon>
        <taxon>Viridiplantae</taxon>
        <taxon>Streptophyta</taxon>
        <taxon>Embryophyta</taxon>
        <taxon>Tracheophyta</taxon>
        <taxon>Spermatophyta</taxon>
        <taxon>Magnoliopsida</taxon>
        <taxon>eudicotyledons</taxon>
        <taxon>Gunneridae</taxon>
        <taxon>Pentapetalae</taxon>
        <taxon>asterids</taxon>
        <taxon>lamiids</taxon>
        <taxon>Solanales</taxon>
        <taxon>Solanaceae</taxon>
        <taxon>Solanoideae</taxon>
        <taxon>Solaneae</taxon>
        <taxon>Solanum</taxon>
    </lineage>
</organism>
<dbReference type="EC" id="4.3.1.24" evidence="2"/>
<dbReference type="EMBL" id="X63103">
    <property type="protein sequence ID" value="CAA44817.1"/>
    <property type="molecule type" value="Genomic_DNA"/>
</dbReference>
<dbReference type="PIR" id="S21174">
    <property type="entry name" value="S21174"/>
</dbReference>
<dbReference type="SMR" id="P31425"/>
<dbReference type="FunCoup" id="P31425">
    <property type="interactions" value="377"/>
</dbReference>
<dbReference type="STRING" id="4113.P31425"/>
<dbReference type="PaxDb" id="4113-PGSC0003DMT400055531"/>
<dbReference type="eggNOG" id="KOG0222">
    <property type="taxonomic scope" value="Eukaryota"/>
</dbReference>
<dbReference type="InParanoid" id="P31425"/>
<dbReference type="UniPathway" id="UPA00713">
    <property type="reaction ID" value="UER00725"/>
</dbReference>
<dbReference type="Proteomes" id="UP000011115">
    <property type="component" value="Unassembled WGS sequence"/>
</dbReference>
<dbReference type="ExpressionAtlas" id="P31425">
    <property type="expression patterns" value="baseline and differential"/>
</dbReference>
<dbReference type="GO" id="GO:0005737">
    <property type="term" value="C:cytoplasm"/>
    <property type="evidence" value="ECO:0007669"/>
    <property type="project" value="UniProtKB-SubCell"/>
</dbReference>
<dbReference type="GO" id="GO:0016841">
    <property type="term" value="F:ammonia-lyase activity"/>
    <property type="evidence" value="ECO:0000318"/>
    <property type="project" value="GO_Central"/>
</dbReference>
<dbReference type="GO" id="GO:0045548">
    <property type="term" value="F:phenylalanine ammonia-lyase activity"/>
    <property type="evidence" value="ECO:0007669"/>
    <property type="project" value="UniProtKB-EC"/>
</dbReference>
<dbReference type="GO" id="GO:0009800">
    <property type="term" value="P:cinnamic acid biosynthetic process"/>
    <property type="evidence" value="ECO:0007669"/>
    <property type="project" value="UniProtKB-UniPathway"/>
</dbReference>
<dbReference type="GO" id="GO:0006559">
    <property type="term" value="P:L-phenylalanine catabolic process"/>
    <property type="evidence" value="ECO:0007669"/>
    <property type="project" value="UniProtKB-KW"/>
</dbReference>
<dbReference type="CDD" id="cd00332">
    <property type="entry name" value="PAL-HAL"/>
    <property type="match status" value="1"/>
</dbReference>
<dbReference type="FunFam" id="1.10.274.20:FF:000001">
    <property type="entry name" value="Phenylalanine ammonia-lyase"/>
    <property type="match status" value="1"/>
</dbReference>
<dbReference type="FunFam" id="1.10.275.10:FF:000009">
    <property type="entry name" value="Phenylalanine ammonia-lyase"/>
    <property type="match status" value="1"/>
</dbReference>
<dbReference type="FunFam" id="1.20.200.10:FF:000009">
    <property type="entry name" value="Phenylalanine ammonia-lyase"/>
    <property type="match status" value="1"/>
</dbReference>
<dbReference type="Gene3D" id="1.20.200.10">
    <property type="entry name" value="Fumarase/aspartase (Central domain)"/>
    <property type="match status" value="1"/>
</dbReference>
<dbReference type="Gene3D" id="1.10.275.10">
    <property type="entry name" value="Fumarase/aspartase (N-terminal domain)"/>
    <property type="match status" value="1"/>
</dbReference>
<dbReference type="Gene3D" id="1.10.274.20">
    <property type="entry name" value="Phenylalanine ammonia-lyase 1, domain 3"/>
    <property type="match status" value="1"/>
</dbReference>
<dbReference type="InterPro" id="IPR001106">
    <property type="entry name" value="Aromatic_Lyase"/>
</dbReference>
<dbReference type="InterPro" id="IPR024083">
    <property type="entry name" value="Fumarase/histidase_N"/>
</dbReference>
<dbReference type="InterPro" id="IPR008948">
    <property type="entry name" value="L-Aspartase-like"/>
</dbReference>
<dbReference type="InterPro" id="IPR022313">
    <property type="entry name" value="Phe/His_NH3-lyase_AS"/>
</dbReference>
<dbReference type="InterPro" id="IPR005922">
    <property type="entry name" value="Phe_NH3-lyase"/>
</dbReference>
<dbReference type="InterPro" id="IPR023144">
    <property type="entry name" value="Phe_NH3-lyase_shielding_dom_sf"/>
</dbReference>
<dbReference type="NCBIfam" id="TIGR01226">
    <property type="entry name" value="phe_am_lyase"/>
    <property type="match status" value="1"/>
</dbReference>
<dbReference type="PANTHER" id="PTHR10362">
    <property type="entry name" value="HISTIDINE AMMONIA-LYASE"/>
    <property type="match status" value="1"/>
</dbReference>
<dbReference type="Pfam" id="PF00221">
    <property type="entry name" value="Lyase_aromatic"/>
    <property type="match status" value="1"/>
</dbReference>
<dbReference type="SUPFAM" id="SSF48557">
    <property type="entry name" value="L-aspartase-like"/>
    <property type="match status" value="1"/>
</dbReference>
<dbReference type="PROSITE" id="PS00488">
    <property type="entry name" value="PAL_HISTIDASE"/>
    <property type="match status" value="1"/>
</dbReference>
<gene>
    <name type="primary">PAL-1</name>
</gene>
<comment type="function">
    <text evidence="2">This is a key enzyme of plant metabolism catalyzing the first reaction in the biosynthesis from L-phenylalanine of a wide variety of natural products based on the phenylpropane skeleton.</text>
</comment>
<comment type="catalytic activity">
    <reaction evidence="2">
        <text>L-phenylalanine = (E)-cinnamate + NH4(+)</text>
        <dbReference type="Rhea" id="RHEA:21384"/>
        <dbReference type="ChEBI" id="CHEBI:15669"/>
        <dbReference type="ChEBI" id="CHEBI:28938"/>
        <dbReference type="ChEBI" id="CHEBI:58095"/>
        <dbReference type="EC" id="4.3.1.24"/>
    </reaction>
</comment>
<comment type="pathway">
    <text evidence="5">Phenylpropanoid metabolism; trans-cinnamate biosynthesis; trans-cinnamate from L-phenylalanine: step 1/1.</text>
</comment>
<comment type="subunit">
    <text evidence="2">Homotetramer.</text>
</comment>
<comment type="subcellular location">
    <subcellularLocation>
        <location evidence="5">Cytoplasm</location>
    </subcellularLocation>
</comment>
<comment type="PTM">
    <text evidence="3">Contains an active site 4-methylidene-imidazol-5-one (MIO), which is formed autocatalytically by cyclization and dehydration of residues Ala-Ser-Gly.</text>
</comment>
<comment type="similarity">
    <text evidence="5">Belongs to the PAL/histidase family.</text>
</comment>
<feature type="chain" id="PRO_0000215419" description="Phenylalanine ammonia-lyase 1">
    <location>
        <begin position="1"/>
        <end position="720"/>
    </location>
</feature>
<feature type="active site" description="Proton donor/acceptor" evidence="3">
    <location>
        <position position="112"/>
    </location>
</feature>
<feature type="binding site" evidence="3">
    <location>
        <position position="264"/>
    </location>
    <ligand>
        <name>(E)-cinnamate</name>
        <dbReference type="ChEBI" id="CHEBI:15669"/>
    </ligand>
</feature>
<feature type="binding site" evidence="3">
    <location>
        <position position="352"/>
    </location>
    <ligand>
        <name>(E)-cinnamate</name>
        <dbReference type="ChEBI" id="CHEBI:15669"/>
    </ligand>
</feature>
<feature type="binding site" evidence="3">
    <location>
        <position position="358"/>
    </location>
    <ligand>
        <name>(E)-cinnamate</name>
        <dbReference type="ChEBI" id="CHEBI:15669"/>
    </ligand>
</feature>
<feature type="binding site" evidence="3">
    <location>
        <position position="388"/>
    </location>
    <ligand>
        <name>(E)-cinnamate</name>
        <dbReference type="ChEBI" id="CHEBI:15669"/>
    </ligand>
</feature>
<feature type="binding site" evidence="1">
    <location>
        <position position="460"/>
    </location>
    <ligand>
        <name>(E)-cinnamate</name>
        <dbReference type="ChEBI" id="CHEBI:15669"/>
    </ligand>
</feature>
<feature type="binding site" evidence="1">
    <location>
        <position position="488"/>
    </location>
    <ligand>
        <name>(E)-cinnamate</name>
        <dbReference type="ChEBI" id="CHEBI:15669"/>
    </ligand>
</feature>
<feature type="binding site" evidence="3">
    <location>
        <position position="491"/>
    </location>
    <ligand>
        <name>(E)-cinnamate</name>
        <dbReference type="ChEBI" id="CHEBI:15669"/>
    </ligand>
</feature>
<feature type="modified residue" description="2,3-didehydroalanine (Ser)" evidence="4">
    <location>
        <position position="207"/>
    </location>
</feature>
<feature type="cross-link" description="5-imidazolinone (Ala-Gly)" evidence="3">
    <location>
        <begin position="206"/>
        <end position="208"/>
    </location>
</feature>
<reference key="1">
    <citation type="journal article" date="1992" name="Eur. J. Biochem.">
        <title>Phenylalanine ammonia-lyase in potato (Solanum tuberosum L.). Genomic complexity, structural comparison of two selected genes and modes of expression.</title>
        <authorList>
            <person name="Joos H.J."/>
            <person name="Hahlbrock K."/>
        </authorList>
    </citation>
    <scope>NUCLEOTIDE SEQUENCE [GENOMIC DNA]</scope>
    <source>
        <strain>cv. Datura</strain>
    </source>
</reference>
<sequence length="720" mass="78618">MAPSIAQNGHVNGEVEEVLWKKSIHDPLNWEMAVDSLRGSHLDEVKKMVDEFRKPIVKLWGETLTVAQVASIANADNKTSGFKVELSESARAGVKASSDWVMDSMSKGTDSYGVTTGFCATSHRRTKNGGALQKELIKFLNAGVFGNGTESTHTLPHSATRAAMLVRINTLLQGYSGIRFEILEAITKLINSNITPCLPLRGTVTASGDLVPLSYIAGLLTGRPNSKAVGPSGSKLDADEAFRVAAVSGGFFELQPKEGLALVNGTAVGSGMASIVLYDSNILAVMFEVLSAIFAEVMNGKPEFTDYLTHKLKHHPGQIEAAAIMEHILDGSSYVKAAQKLHEMDPLQKPKQDRYALRTSPQWLGPQIEVIRAATKMIEREINSVNDNPLIDVSRNKAIHGGNFQGTPIGVSMDNTRLALASIGKLMFAQFSELVNDYYNNGLPSNLTAGRNPSLDYGFKGAEIAMASYCSELQFLANPVTNHVQSAEQHNQDVNSLGLISARKTAEAVDILKLMSSTYLVALCQAIDLRHLEENLKSVVKNTVSQVAKRTLTIGAIGELHPARFCEKELLRVVDREYLFTYADDPCSSTYPLMQKLRQVLVDHAMKNGESEKNINSSIFQKIGAFEDELNAVLPKEVESARALLESGNPSIPNRITECRSYPLYRLVRQELGTELLTGEKVRSPGEEIEKVFTAMCNGQINDPLLECLKSWNGAPLPIC</sequence>
<name>PAL1_SOLTU</name>